<dbReference type="EC" id="7.1.1.-" evidence="1"/>
<dbReference type="EMBL" id="CP001215">
    <property type="protein sequence ID" value="ACP13826.1"/>
    <property type="molecule type" value="Genomic_DNA"/>
</dbReference>
<dbReference type="RefSeq" id="WP_000236331.1">
    <property type="nucleotide sequence ID" value="NC_012581.1"/>
</dbReference>
<dbReference type="SMR" id="C3LFH3"/>
<dbReference type="GeneID" id="92803556"/>
<dbReference type="KEGG" id="bah:BAMEG_5588"/>
<dbReference type="HOGENOM" id="CLU_055737_7_3_9"/>
<dbReference type="GO" id="GO:0005886">
    <property type="term" value="C:plasma membrane"/>
    <property type="evidence" value="ECO:0007669"/>
    <property type="project" value="UniProtKB-SubCell"/>
</dbReference>
<dbReference type="GO" id="GO:0045271">
    <property type="term" value="C:respiratory chain complex I"/>
    <property type="evidence" value="ECO:0007669"/>
    <property type="project" value="TreeGrafter"/>
</dbReference>
<dbReference type="GO" id="GO:0051539">
    <property type="term" value="F:4 iron, 4 sulfur cluster binding"/>
    <property type="evidence" value="ECO:0007669"/>
    <property type="project" value="UniProtKB-KW"/>
</dbReference>
<dbReference type="GO" id="GO:0005506">
    <property type="term" value="F:iron ion binding"/>
    <property type="evidence" value="ECO:0007669"/>
    <property type="project" value="UniProtKB-UniRule"/>
</dbReference>
<dbReference type="GO" id="GO:0008137">
    <property type="term" value="F:NADH dehydrogenase (ubiquinone) activity"/>
    <property type="evidence" value="ECO:0007669"/>
    <property type="project" value="InterPro"/>
</dbReference>
<dbReference type="GO" id="GO:0050136">
    <property type="term" value="F:NADH:ubiquinone reductase (non-electrogenic) activity"/>
    <property type="evidence" value="ECO:0007669"/>
    <property type="project" value="UniProtKB-UniRule"/>
</dbReference>
<dbReference type="GO" id="GO:0048038">
    <property type="term" value="F:quinone binding"/>
    <property type="evidence" value="ECO:0007669"/>
    <property type="project" value="UniProtKB-KW"/>
</dbReference>
<dbReference type="GO" id="GO:0009060">
    <property type="term" value="P:aerobic respiration"/>
    <property type="evidence" value="ECO:0007669"/>
    <property type="project" value="TreeGrafter"/>
</dbReference>
<dbReference type="GO" id="GO:0015990">
    <property type="term" value="P:electron transport coupled proton transport"/>
    <property type="evidence" value="ECO:0007669"/>
    <property type="project" value="TreeGrafter"/>
</dbReference>
<dbReference type="FunFam" id="3.40.50.12280:FF:000002">
    <property type="entry name" value="NADH-quinone oxidoreductase subunit B"/>
    <property type="match status" value="1"/>
</dbReference>
<dbReference type="Gene3D" id="3.40.50.12280">
    <property type="match status" value="1"/>
</dbReference>
<dbReference type="HAMAP" id="MF_01356">
    <property type="entry name" value="NDH1_NuoB"/>
    <property type="match status" value="1"/>
</dbReference>
<dbReference type="InterPro" id="IPR006137">
    <property type="entry name" value="NADH_UbQ_OxRdtase-like_20kDa"/>
</dbReference>
<dbReference type="InterPro" id="IPR006138">
    <property type="entry name" value="NADH_UQ_OxRdtase_20Kd_su"/>
</dbReference>
<dbReference type="NCBIfam" id="TIGR01957">
    <property type="entry name" value="nuoB_fam"/>
    <property type="match status" value="1"/>
</dbReference>
<dbReference type="NCBIfam" id="NF005012">
    <property type="entry name" value="PRK06411.1"/>
    <property type="match status" value="1"/>
</dbReference>
<dbReference type="PANTHER" id="PTHR11995">
    <property type="entry name" value="NADH DEHYDROGENASE"/>
    <property type="match status" value="1"/>
</dbReference>
<dbReference type="PANTHER" id="PTHR11995:SF14">
    <property type="entry name" value="NADH DEHYDROGENASE [UBIQUINONE] IRON-SULFUR PROTEIN 7, MITOCHONDRIAL"/>
    <property type="match status" value="1"/>
</dbReference>
<dbReference type="Pfam" id="PF01058">
    <property type="entry name" value="Oxidored_q6"/>
    <property type="match status" value="1"/>
</dbReference>
<dbReference type="SUPFAM" id="SSF56770">
    <property type="entry name" value="HydA/Nqo6-like"/>
    <property type="match status" value="1"/>
</dbReference>
<keyword id="KW-0004">4Fe-4S</keyword>
<keyword id="KW-1003">Cell membrane</keyword>
<keyword id="KW-0408">Iron</keyword>
<keyword id="KW-0411">Iron-sulfur</keyword>
<keyword id="KW-0472">Membrane</keyword>
<keyword id="KW-0479">Metal-binding</keyword>
<keyword id="KW-0520">NAD</keyword>
<keyword id="KW-0874">Quinone</keyword>
<keyword id="KW-1278">Translocase</keyword>
<keyword id="KW-0813">Transport</keyword>
<reference key="1">
    <citation type="submission" date="2008-10" db="EMBL/GenBank/DDBJ databases">
        <title>Genome sequence of Bacillus anthracis str. CDC 684.</title>
        <authorList>
            <person name="Dodson R.J."/>
            <person name="Munk A.C."/>
            <person name="Brettin T."/>
            <person name="Bruce D."/>
            <person name="Detter C."/>
            <person name="Tapia R."/>
            <person name="Han C."/>
            <person name="Sutton G."/>
            <person name="Sims D."/>
        </authorList>
    </citation>
    <scope>NUCLEOTIDE SEQUENCE [LARGE SCALE GENOMIC DNA]</scope>
    <source>
        <strain>CDC 684 / NRRL 3495</strain>
    </source>
</reference>
<sequence length="172" mass="19226">MVINFEELHPNERAELERNIFFSTLEQLKGWARSNSLWPMTFGLACCAIEMMGVGSSHYDLDRFGSFFRTSPRQSDVMIVSGTVTKKMAPIVRRLYDQMPEPKWVIAMGSCATAGGPYVNSYAVVKGVDQIVPVDVYIPGCPPNPAALIYGINKLKEKIRYEAKTGKQVTNK</sequence>
<gene>
    <name evidence="1" type="primary">nuoB</name>
    <name type="ordered locus">BAMEG_5588</name>
</gene>
<accession>C3LFH3</accession>
<organism>
    <name type="scientific">Bacillus anthracis (strain CDC 684 / NRRL 3495)</name>
    <dbReference type="NCBI Taxonomy" id="568206"/>
    <lineage>
        <taxon>Bacteria</taxon>
        <taxon>Bacillati</taxon>
        <taxon>Bacillota</taxon>
        <taxon>Bacilli</taxon>
        <taxon>Bacillales</taxon>
        <taxon>Bacillaceae</taxon>
        <taxon>Bacillus</taxon>
        <taxon>Bacillus cereus group</taxon>
    </lineage>
</organism>
<evidence type="ECO:0000255" key="1">
    <source>
        <dbReference type="HAMAP-Rule" id="MF_01356"/>
    </source>
</evidence>
<name>NUOB_BACAC</name>
<proteinExistence type="inferred from homology"/>
<feature type="chain" id="PRO_1000166649" description="NADH-quinone oxidoreductase subunit B">
    <location>
        <begin position="1"/>
        <end position="172"/>
    </location>
</feature>
<feature type="binding site" evidence="1">
    <location>
        <position position="46"/>
    </location>
    <ligand>
        <name>[4Fe-4S] cluster</name>
        <dbReference type="ChEBI" id="CHEBI:49883"/>
    </ligand>
</feature>
<feature type="binding site" evidence="1">
    <location>
        <position position="47"/>
    </location>
    <ligand>
        <name>[4Fe-4S] cluster</name>
        <dbReference type="ChEBI" id="CHEBI:49883"/>
    </ligand>
</feature>
<feature type="binding site" evidence="1">
    <location>
        <position position="111"/>
    </location>
    <ligand>
        <name>[4Fe-4S] cluster</name>
        <dbReference type="ChEBI" id="CHEBI:49883"/>
    </ligand>
</feature>
<feature type="binding site" evidence="1">
    <location>
        <position position="141"/>
    </location>
    <ligand>
        <name>[4Fe-4S] cluster</name>
        <dbReference type="ChEBI" id="CHEBI:49883"/>
    </ligand>
</feature>
<comment type="function">
    <text evidence="1">NDH-1 shuttles electrons from NADH, via FMN and iron-sulfur (Fe-S) centers, to quinones in the respiratory chain. The immediate electron acceptor for the enzyme in this species is believed to be a menaquinone. Couples the redox reaction to proton translocation (for every two electrons transferred, four hydrogen ions are translocated across the cytoplasmic membrane), and thus conserves the redox energy in a proton gradient.</text>
</comment>
<comment type="catalytic activity">
    <reaction evidence="1">
        <text>a quinone + NADH + 5 H(+)(in) = a quinol + NAD(+) + 4 H(+)(out)</text>
        <dbReference type="Rhea" id="RHEA:57888"/>
        <dbReference type="ChEBI" id="CHEBI:15378"/>
        <dbReference type="ChEBI" id="CHEBI:24646"/>
        <dbReference type="ChEBI" id="CHEBI:57540"/>
        <dbReference type="ChEBI" id="CHEBI:57945"/>
        <dbReference type="ChEBI" id="CHEBI:132124"/>
    </reaction>
</comment>
<comment type="cofactor">
    <cofactor evidence="1">
        <name>[4Fe-4S] cluster</name>
        <dbReference type="ChEBI" id="CHEBI:49883"/>
    </cofactor>
    <text evidence="1">Binds 1 [4Fe-4S] cluster.</text>
</comment>
<comment type="subunit">
    <text evidence="1">NDH-1 is composed of 14 different subunits. Subunits NuoB, C, D, E, F, and G constitute the peripheral sector of the complex.</text>
</comment>
<comment type="subcellular location">
    <subcellularLocation>
        <location evidence="1">Cell membrane</location>
        <topology evidence="1">Peripheral membrane protein</topology>
        <orientation evidence="1">Cytoplasmic side</orientation>
    </subcellularLocation>
</comment>
<comment type="similarity">
    <text evidence="1">Belongs to the complex I 20 kDa subunit family.</text>
</comment>
<protein>
    <recommendedName>
        <fullName evidence="1">NADH-quinone oxidoreductase subunit B</fullName>
        <ecNumber evidence="1">7.1.1.-</ecNumber>
    </recommendedName>
    <alternativeName>
        <fullName evidence="1">NADH dehydrogenase I subunit B</fullName>
    </alternativeName>
    <alternativeName>
        <fullName evidence="1">NDH-1 subunit B</fullName>
    </alternativeName>
</protein>